<organism>
    <name type="scientific">Thermus thermophilus (strain ATCC BAA-163 / DSM 7039 / HB27)</name>
    <dbReference type="NCBI Taxonomy" id="262724"/>
    <lineage>
        <taxon>Bacteria</taxon>
        <taxon>Thermotogati</taxon>
        <taxon>Deinococcota</taxon>
        <taxon>Deinococci</taxon>
        <taxon>Thermales</taxon>
        <taxon>Thermaceae</taxon>
        <taxon>Thermus</taxon>
    </lineage>
</organism>
<feature type="chain" id="PRO_0000076833" description="3-isopropylmalate dehydratase large subunit">
    <location>
        <begin position="1"/>
        <end position="472"/>
    </location>
</feature>
<feature type="binding site" evidence="1">
    <location>
        <position position="346"/>
    </location>
    <ligand>
        <name>[4Fe-4S] cluster</name>
        <dbReference type="ChEBI" id="CHEBI:49883"/>
    </ligand>
</feature>
<feature type="binding site" evidence="1">
    <location>
        <position position="406"/>
    </location>
    <ligand>
        <name>[4Fe-4S] cluster</name>
        <dbReference type="ChEBI" id="CHEBI:49883"/>
    </ligand>
</feature>
<feature type="binding site" evidence="1">
    <location>
        <position position="409"/>
    </location>
    <ligand>
        <name>[4Fe-4S] cluster</name>
        <dbReference type="ChEBI" id="CHEBI:49883"/>
    </ligand>
</feature>
<sequence>MGKTLYEKVWEAHEVRKLKNGQSQLFIDLHLLHEVTSPQAFGMLKDLGLRVRYPHRTFATVDHIVPTHDRTEPFQDPLAQSMLEALRANTREHGITFFDLGSGNQGIVHVIGPQLGLTQPGMTIACGDSHTSTHGAFGAVAFGIGTSQVRDVLATQTLAAQKLKVRRINVEGRLAPGVYAKDVILHIIRHLGVKGGLGYAYEYGGSAVEAMDMESRMTLCNMSIEGGARIGYVNPDETTFQYLEGRPYVPKGSEWEEAKRRWLAWRSDPDASYDDVVTFRAEEIAPTVTWGITPGQAIPIDGRIPLLEELPEEERPVAEEALAYMGFRPGQPIKGVPIQVAFIGSCTNARLSDLREVARYLKGHKVKKGVRALVVPGSEWVARKAEEEGIAEVFREAGFEWRMPGCSMCLAMNPDRLEGDELCASSSNRNYKGRMGSPRGRTVLMSPLMVAAAAVAGEIADAREVFGLAGVR</sequence>
<keyword id="KW-0004">4Fe-4S</keyword>
<keyword id="KW-0028">Amino-acid biosynthesis</keyword>
<keyword id="KW-0100">Branched-chain amino acid biosynthesis</keyword>
<keyword id="KW-0408">Iron</keyword>
<keyword id="KW-0411">Iron-sulfur</keyword>
<keyword id="KW-0432">Leucine biosynthesis</keyword>
<keyword id="KW-0456">Lyase</keyword>
<keyword id="KW-0479">Metal-binding</keyword>
<comment type="function">
    <text evidence="1">Catalyzes the isomerization between 2-isopropylmalate and 3-isopropylmalate, via the formation of 2-isopropylmaleate.</text>
</comment>
<comment type="catalytic activity">
    <reaction evidence="1">
        <text>(2R,3S)-3-isopropylmalate = (2S)-2-isopropylmalate</text>
        <dbReference type="Rhea" id="RHEA:32287"/>
        <dbReference type="ChEBI" id="CHEBI:1178"/>
        <dbReference type="ChEBI" id="CHEBI:35121"/>
        <dbReference type="EC" id="4.2.1.33"/>
    </reaction>
</comment>
<comment type="cofactor">
    <cofactor evidence="1">
        <name>[4Fe-4S] cluster</name>
        <dbReference type="ChEBI" id="CHEBI:49883"/>
    </cofactor>
    <text evidence="1">Binds 1 [4Fe-4S] cluster per subunit.</text>
</comment>
<comment type="pathway">
    <text evidence="1">Amino-acid biosynthesis; L-leucine biosynthesis; L-leucine from 3-methyl-2-oxobutanoate: step 2/4.</text>
</comment>
<comment type="subunit">
    <text evidence="1">Heterodimer of LeuC and LeuD.</text>
</comment>
<comment type="similarity">
    <text evidence="1">Belongs to the aconitase/IPM isomerase family. LeuC type 1 subfamily.</text>
</comment>
<evidence type="ECO:0000255" key="1">
    <source>
        <dbReference type="HAMAP-Rule" id="MF_01026"/>
    </source>
</evidence>
<reference key="1">
    <citation type="journal article" date="2004" name="Nat. Biotechnol.">
        <title>The genome sequence of the extreme thermophile Thermus thermophilus.</title>
        <authorList>
            <person name="Henne A."/>
            <person name="Brueggemann H."/>
            <person name="Raasch C."/>
            <person name="Wiezer A."/>
            <person name="Hartsch T."/>
            <person name="Liesegang H."/>
            <person name="Johann A."/>
            <person name="Lienard T."/>
            <person name="Gohl O."/>
            <person name="Martinez-Arias R."/>
            <person name="Jacobi C."/>
            <person name="Starkuviene V."/>
            <person name="Schlenczeck S."/>
            <person name="Dencker S."/>
            <person name="Huber R."/>
            <person name="Klenk H.-P."/>
            <person name="Kramer W."/>
            <person name="Merkl R."/>
            <person name="Gottschalk G."/>
            <person name="Fritz H.-J."/>
        </authorList>
    </citation>
    <scope>NUCLEOTIDE SEQUENCE [LARGE SCALE GENOMIC DNA]</scope>
    <source>
        <strain>ATCC BAA-163 / DSM 7039 / HB27</strain>
    </source>
</reference>
<accession>Q72JB3</accession>
<protein>
    <recommendedName>
        <fullName evidence="1">3-isopropylmalate dehydratase large subunit</fullName>
        <ecNumber evidence="1">4.2.1.33</ecNumber>
    </recommendedName>
    <alternativeName>
        <fullName evidence="1">Alpha-IPM isomerase</fullName>
        <shortName evidence="1">IPMI</shortName>
    </alternativeName>
    <alternativeName>
        <fullName evidence="1">Isopropylmalate isomerase</fullName>
    </alternativeName>
</protein>
<gene>
    <name evidence="1" type="primary">leuC</name>
    <name type="ordered locus">TT_C0865</name>
</gene>
<name>LEUC_THET2</name>
<proteinExistence type="inferred from homology"/>
<dbReference type="EC" id="4.2.1.33" evidence="1"/>
<dbReference type="EMBL" id="AE017221">
    <property type="protein sequence ID" value="AAS81209.1"/>
    <property type="molecule type" value="Genomic_DNA"/>
</dbReference>
<dbReference type="RefSeq" id="WP_011173294.1">
    <property type="nucleotide sequence ID" value="NC_005835.1"/>
</dbReference>
<dbReference type="SMR" id="Q72JB3"/>
<dbReference type="GeneID" id="3168997"/>
<dbReference type="KEGG" id="tth:TT_C0865"/>
<dbReference type="eggNOG" id="COG0065">
    <property type="taxonomic scope" value="Bacteria"/>
</dbReference>
<dbReference type="HOGENOM" id="CLU_006714_3_4_0"/>
<dbReference type="OrthoDB" id="9802769at2"/>
<dbReference type="UniPathway" id="UPA00048">
    <property type="reaction ID" value="UER00071"/>
</dbReference>
<dbReference type="Proteomes" id="UP000000592">
    <property type="component" value="Chromosome"/>
</dbReference>
<dbReference type="GO" id="GO:0003861">
    <property type="term" value="F:3-isopropylmalate dehydratase activity"/>
    <property type="evidence" value="ECO:0007669"/>
    <property type="project" value="UniProtKB-UniRule"/>
</dbReference>
<dbReference type="GO" id="GO:0051539">
    <property type="term" value="F:4 iron, 4 sulfur cluster binding"/>
    <property type="evidence" value="ECO:0007669"/>
    <property type="project" value="UniProtKB-KW"/>
</dbReference>
<dbReference type="GO" id="GO:0046872">
    <property type="term" value="F:metal ion binding"/>
    <property type="evidence" value="ECO:0007669"/>
    <property type="project" value="UniProtKB-KW"/>
</dbReference>
<dbReference type="GO" id="GO:0009098">
    <property type="term" value="P:L-leucine biosynthetic process"/>
    <property type="evidence" value="ECO:0007669"/>
    <property type="project" value="UniProtKB-UniRule"/>
</dbReference>
<dbReference type="CDD" id="cd01583">
    <property type="entry name" value="IPMI"/>
    <property type="match status" value="1"/>
</dbReference>
<dbReference type="Gene3D" id="3.30.499.10">
    <property type="entry name" value="Aconitase, domain 3"/>
    <property type="match status" value="2"/>
</dbReference>
<dbReference type="HAMAP" id="MF_01026">
    <property type="entry name" value="LeuC_type1"/>
    <property type="match status" value="1"/>
</dbReference>
<dbReference type="InterPro" id="IPR004430">
    <property type="entry name" value="3-IsopropMal_deHydase_lsu"/>
</dbReference>
<dbReference type="InterPro" id="IPR015931">
    <property type="entry name" value="Acnase/IPM_dHydase_lsu_aba_1/3"/>
</dbReference>
<dbReference type="InterPro" id="IPR001030">
    <property type="entry name" value="Acoase/IPM_deHydtase_lsu_aba"/>
</dbReference>
<dbReference type="InterPro" id="IPR018136">
    <property type="entry name" value="Aconitase_4Fe-4S_BS"/>
</dbReference>
<dbReference type="InterPro" id="IPR036008">
    <property type="entry name" value="Aconitase_4Fe-4S_dom"/>
</dbReference>
<dbReference type="InterPro" id="IPR050067">
    <property type="entry name" value="IPM_dehydratase_rel_enz"/>
</dbReference>
<dbReference type="InterPro" id="IPR033941">
    <property type="entry name" value="IPMI_cat"/>
</dbReference>
<dbReference type="NCBIfam" id="TIGR00170">
    <property type="entry name" value="leuC"/>
    <property type="match status" value="1"/>
</dbReference>
<dbReference type="NCBIfam" id="NF004016">
    <property type="entry name" value="PRK05478.1"/>
    <property type="match status" value="1"/>
</dbReference>
<dbReference type="NCBIfam" id="NF009116">
    <property type="entry name" value="PRK12466.1"/>
    <property type="match status" value="1"/>
</dbReference>
<dbReference type="PANTHER" id="PTHR43822:SF9">
    <property type="entry name" value="3-ISOPROPYLMALATE DEHYDRATASE"/>
    <property type="match status" value="1"/>
</dbReference>
<dbReference type="PANTHER" id="PTHR43822">
    <property type="entry name" value="HOMOACONITASE, MITOCHONDRIAL-RELATED"/>
    <property type="match status" value="1"/>
</dbReference>
<dbReference type="Pfam" id="PF00330">
    <property type="entry name" value="Aconitase"/>
    <property type="match status" value="1"/>
</dbReference>
<dbReference type="PRINTS" id="PR00415">
    <property type="entry name" value="ACONITASE"/>
</dbReference>
<dbReference type="SUPFAM" id="SSF53732">
    <property type="entry name" value="Aconitase iron-sulfur domain"/>
    <property type="match status" value="1"/>
</dbReference>
<dbReference type="PROSITE" id="PS00450">
    <property type="entry name" value="ACONITASE_1"/>
    <property type="match status" value="1"/>
</dbReference>
<dbReference type="PROSITE" id="PS01244">
    <property type="entry name" value="ACONITASE_2"/>
    <property type="match status" value="1"/>
</dbReference>